<organism>
    <name type="scientific">Streptococcus pyogenes serotype M28 (strain MGAS6180)</name>
    <dbReference type="NCBI Taxonomy" id="319701"/>
    <lineage>
        <taxon>Bacteria</taxon>
        <taxon>Bacillati</taxon>
        <taxon>Bacillota</taxon>
        <taxon>Bacilli</taxon>
        <taxon>Lactobacillales</taxon>
        <taxon>Streptococcaceae</taxon>
        <taxon>Streptococcus</taxon>
    </lineage>
</organism>
<keyword id="KW-1003">Cell membrane</keyword>
<keyword id="KW-0342">GTP-binding</keyword>
<keyword id="KW-0378">Hydrolase</keyword>
<keyword id="KW-0472">Membrane</keyword>
<keyword id="KW-0547">Nucleotide-binding</keyword>
<keyword id="KW-0648">Protein biosynthesis</keyword>
<proteinExistence type="inferred from homology"/>
<evidence type="ECO:0000255" key="1">
    <source>
        <dbReference type="HAMAP-Rule" id="MF_00071"/>
    </source>
</evidence>
<reference key="1">
    <citation type="journal article" date="2005" name="J. Infect. Dis.">
        <title>Genome sequence of a serotype M28 strain of group A Streptococcus: potential new insights into puerperal sepsis and bacterial disease specificity.</title>
        <authorList>
            <person name="Green N.M."/>
            <person name="Zhang S."/>
            <person name="Porcella S.F."/>
            <person name="Nagiec M.J."/>
            <person name="Barbian K.D."/>
            <person name="Beres S.B."/>
            <person name="Lefebvre R.B."/>
            <person name="Musser J.M."/>
        </authorList>
    </citation>
    <scope>NUCLEOTIDE SEQUENCE [LARGE SCALE GENOMIC DNA]</scope>
    <source>
        <strain>MGAS6180</strain>
    </source>
</reference>
<protein>
    <recommendedName>
        <fullName evidence="1">Elongation factor 4</fullName>
        <shortName evidence="1">EF-4</shortName>
        <ecNumber evidence="1">3.6.5.n1</ecNumber>
    </recommendedName>
    <alternativeName>
        <fullName evidence="1">Ribosomal back-translocase LepA</fullName>
    </alternativeName>
</protein>
<gene>
    <name evidence="1" type="primary">lepA</name>
    <name type="ordered locus">M28_Spy0753</name>
</gene>
<feature type="chain" id="PRO_0000224801" description="Elongation factor 4">
    <location>
        <begin position="1"/>
        <end position="610"/>
    </location>
</feature>
<feature type="domain" description="tr-type G">
    <location>
        <begin position="11"/>
        <end position="193"/>
    </location>
</feature>
<feature type="binding site" evidence="1">
    <location>
        <begin position="23"/>
        <end position="28"/>
    </location>
    <ligand>
        <name>GTP</name>
        <dbReference type="ChEBI" id="CHEBI:37565"/>
    </ligand>
</feature>
<feature type="binding site" evidence="1">
    <location>
        <begin position="140"/>
        <end position="143"/>
    </location>
    <ligand>
        <name>GTP</name>
        <dbReference type="ChEBI" id="CHEBI:37565"/>
    </ligand>
</feature>
<comment type="function">
    <text evidence="1">Required for accurate and efficient protein synthesis under certain stress conditions. May act as a fidelity factor of the translation reaction, by catalyzing a one-codon backward translocation of tRNAs on improperly translocated ribosomes. Back-translocation proceeds from a post-translocation (POST) complex to a pre-translocation (PRE) complex, thus giving elongation factor G a second chance to translocate the tRNAs correctly. Binds to ribosomes in a GTP-dependent manner.</text>
</comment>
<comment type="catalytic activity">
    <reaction evidence="1">
        <text>GTP + H2O = GDP + phosphate + H(+)</text>
        <dbReference type="Rhea" id="RHEA:19669"/>
        <dbReference type="ChEBI" id="CHEBI:15377"/>
        <dbReference type="ChEBI" id="CHEBI:15378"/>
        <dbReference type="ChEBI" id="CHEBI:37565"/>
        <dbReference type="ChEBI" id="CHEBI:43474"/>
        <dbReference type="ChEBI" id="CHEBI:58189"/>
        <dbReference type="EC" id="3.6.5.n1"/>
    </reaction>
</comment>
<comment type="subcellular location">
    <subcellularLocation>
        <location evidence="1">Cell membrane</location>
        <topology evidence="1">Peripheral membrane protein</topology>
        <orientation evidence="1">Cytoplasmic side</orientation>
    </subcellularLocation>
</comment>
<comment type="similarity">
    <text evidence="1">Belongs to the TRAFAC class translation factor GTPase superfamily. Classic translation factor GTPase family. LepA subfamily.</text>
</comment>
<accession>Q48TU0</accession>
<sequence>MNSQDLKKRQEKIRNFSIIAHIDHGKSTLADRILEKTETVSSREMQAQLLDSMDLERERGITIKLNAIELNYTAKDGETYIFHLIDTPGHVDFTYEVSRSLAACEGAILVVDAAQGIEAQTLANVYLALDNDLEILPVINKIDLPAADPERVRHEVEDVIGLDASEAVLASAKAGIGIEEILEQIVEKVPAPTGDVDAPLQALIFDSVYDAYRGVILQVRIVNGIVKPGDKIQMMSNGKTFDVTEVGIFTPKAVGRDFLATGDVGYVAASIKTVADTRVGDTVTLANNPAKEALHGYKQMNPMVFAGIYPIESNKYNDLREALEKLQLNDASLQFEPETSQALGFGFRCGFLGLLHMDVIQERLEREFNIDLIMTAPSVVYHVHTTDEDMIEVSNPSEFPDPTRVAFIEEPYVKAQIMVPQEFVGAVMELSQRKRGDFVTMDYIDDNRVNVIYQIPLAEIVFDFFDKLKSSTRGYASFDYDMSEYRRSQLVKMDILLNGDKVDALSFIVHKEFAYERGKIIVEKLKKIIPRQQFEVPIQAAIGQKIVARSDIKALRKNVLAKCYGGDVSRKRKLLEKQKAGKKRMKAIGSVEVPQEAFLSVLSMDDDAKK</sequence>
<dbReference type="EC" id="3.6.5.n1" evidence="1"/>
<dbReference type="EMBL" id="CP000056">
    <property type="protein sequence ID" value="AAX71866.1"/>
    <property type="molecule type" value="Genomic_DNA"/>
</dbReference>
<dbReference type="RefSeq" id="WP_002989943.1">
    <property type="nucleotide sequence ID" value="NC_007296.2"/>
</dbReference>
<dbReference type="SMR" id="Q48TU0"/>
<dbReference type="GeneID" id="69900931"/>
<dbReference type="KEGG" id="spb:M28_Spy0753"/>
<dbReference type="HOGENOM" id="CLU_009995_3_3_9"/>
<dbReference type="GO" id="GO:0005886">
    <property type="term" value="C:plasma membrane"/>
    <property type="evidence" value="ECO:0007669"/>
    <property type="project" value="UniProtKB-SubCell"/>
</dbReference>
<dbReference type="GO" id="GO:0005525">
    <property type="term" value="F:GTP binding"/>
    <property type="evidence" value="ECO:0007669"/>
    <property type="project" value="UniProtKB-UniRule"/>
</dbReference>
<dbReference type="GO" id="GO:0003924">
    <property type="term" value="F:GTPase activity"/>
    <property type="evidence" value="ECO:0007669"/>
    <property type="project" value="UniProtKB-UniRule"/>
</dbReference>
<dbReference type="GO" id="GO:0043022">
    <property type="term" value="F:ribosome binding"/>
    <property type="evidence" value="ECO:0007669"/>
    <property type="project" value="UniProtKB-UniRule"/>
</dbReference>
<dbReference type="GO" id="GO:0003746">
    <property type="term" value="F:translation elongation factor activity"/>
    <property type="evidence" value="ECO:0007669"/>
    <property type="project" value="UniProtKB-UniRule"/>
</dbReference>
<dbReference type="GO" id="GO:0045727">
    <property type="term" value="P:positive regulation of translation"/>
    <property type="evidence" value="ECO:0007669"/>
    <property type="project" value="UniProtKB-UniRule"/>
</dbReference>
<dbReference type="CDD" id="cd03699">
    <property type="entry name" value="EF4_II"/>
    <property type="match status" value="1"/>
</dbReference>
<dbReference type="CDD" id="cd16260">
    <property type="entry name" value="EF4_III"/>
    <property type="match status" value="1"/>
</dbReference>
<dbReference type="CDD" id="cd01890">
    <property type="entry name" value="LepA"/>
    <property type="match status" value="1"/>
</dbReference>
<dbReference type="CDD" id="cd03709">
    <property type="entry name" value="lepA_C"/>
    <property type="match status" value="1"/>
</dbReference>
<dbReference type="FunFam" id="3.40.50.300:FF:000078">
    <property type="entry name" value="Elongation factor 4"/>
    <property type="match status" value="1"/>
</dbReference>
<dbReference type="FunFam" id="2.40.30.10:FF:000015">
    <property type="entry name" value="Translation factor GUF1, mitochondrial"/>
    <property type="match status" value="1"/>
</dbReference>
<dbReference type="FunFam" id="3.30.70.240:FF:000007">
    <property type="entry name" value="Translation factor GUF1, mitochondrial"/>
    <property type="match status" value="1"/>
</dbReference>
<dbReference type="FunFam" id="3.30.70.2570:FF:000001">
    <property type="entry name" value="Translation factor GUF1, mitochondrial"/>
    <property type="match status" value="1"/>
</dbReference>
<dbReference type="FunFam" id="3.30.70.870:FF:000004">
    <property type="entry name" value="Translation factor GUF1, mitochondrial"/>
    <property type="match status" value="1"/>
</dbReference>
<dbReference type="Gene3D" id="3.30.70.240">
    <property type="match status" value="1"/>
</dbReference>
<dbReference type="Gene3D" id="3.30.70.2570">
    <property type="entry name" value="Elongation factor 4, C-terminal domain"/>
    <property type="match status" value="1"/>
</dbReference>
<dbReference type="Gene3D" id="3.30.70.870">
    <property type="entry name" value="Elongation Factor G (Translational Gtpase), domain 3"/>
    <property type="match status" value="1"/>
</dbReference>
<dbReference type="Gene3D" id="3.40.50.300">
    <property type="entry name" value="P-loop containing nucleotide triphosphate hydrolases"/>
    <property type="match status" value="1"/>
</dbReference>
<dbReference type="Gene3D" id="2.40.30.10">
    <property type="entry name" value="Translation factors"/>
    <property type="match status" value="1"/>
</dbReference>
<dbReference type="HAMAP" id="MF_00071">
    <property type="entry name" value="LepA"/>
    <property type="match status" value="1"/>
</dbReference>
<dbReference type="InterPro" id="IPR006297">
    <property type="entry name" value="EF-4"/>
</dbReference>
<dbReference type="InterPro" id="IPR041095">
    <property type="entry name" value="EFG_II"/>
</dbReference>
<dbReference type="InterPro" id="IPR035647">
    <property type="entry name" value="EFG_III/V"/>
</dbReference>
<dbReference type="InterPro" id="IPR000640">
    <property type="entry name" value="EFG_V-like"/>
</dbReference>
<dbReference type="InterPro" id="IPR004161">
    <property type="entry name" value="EFTu-like_2"/>
</dbReference>
<dbReference type="InterPro" id="IPR031157">
    <property type="entry name" value="G_TR_CS"/>
</dbReference>
<dbReference type="InterPro" id="IPR038363">
    <property type="entry name" value="LepA_C_sf"/>
</dbReference>
<dbReference type="InterPro" id="IPR013842">
    <property type="entry name" value="LepA_CTD"/>
</dbReference>
<dbReference type="InterPro" id="IPR035654">
    <property type="entry name" value="LepA_IV"/>
</dbReference>
<dbReference type="InterPro" id="IPR027417">
    <property type="entry name" value="P-loop_NTPase"/>
</dbReference>
<dbReference type="InterPro" id="IPR005225">
    <property type="entry name" value="Small_GTP-bd"/>
</dbReference>
<dbReference type="InterPro" id="IPR000795">
    <property type="entry name" value="T_Tr_GTP-bd_dom"/>
</dbReference>
<dbReference type="InterPro" id="IPR009000">
    <property type="entry name" value="Transl_B-barrel_sf"/>
</dbReference>
<dbReference type="NCBIfam" id="TIGR01393">
    <property type="entry name" value="lepA"/>
    <property type="match status" value="1"/>
</dbReference>
<dbReference type="NCBIfam" id="TIGR00231">
    <property type="entry name" value="small_GTP"/>
    <property type="match status" value="1"/>
</dbReference>
<dbReference type="PANTHER" id="PTHR43512:SF4">
    <property type="entry name" value="TRANSLATION FACTOR GUF1 HOMOLOG, CHLOROPLASTIC"/>
    <property type="match status" value="1"/>
</dbReference>
<dbReference type="PANTHER" id="PTHR43512">
    <property type="entry name" value="TRANSLATION FACTOR GUF1-RELATED"/>
    <property type="match status" value="1"/>
</dbReference>
<dbReference type="Pfam" id="PF00679">
    <property type="entry name" value="EFG_C"/>
    <property type="match status" value="1"/>
</dbReference>
<dbReference type="Pfam" id="PF14492">
    <property type="entry name" value="EFG_III"/>
    <property type="match status" value="1"/>
</dbReference>
<dbReference type="Pfam" id="PF00009">
    <property type="entry name" value="GTP_EFTU"/>
    <property type="match status" value="1"/>
</dbReference>
<dbReference type="Pfam" id="PF03144">
    <property type="entry name" value="GTP_EFTU_D2"/>
    <property type="match status" value="1"/>
</dbReference>
<dbReference type="Pfam" id="PF06421">
    <property type="entry name" value="LepA_C"/>
    <property type="match status" value="1"/>
</dbReference>
<dbReference type="PRINTS" id="PR00315">
    <property type="entry name" value="ELONGATNFCT"/>
</dbReference>
<dbReference type="SMART" id="SM00838">
    <property type="entry name" value="EFG_C"/>
    <property type="match status" value="1"/>
</dbReference>
<dbReference type="SUPFAM" id="SSF54980">
    <property type="entry name" value="EF-G C-terminal domain-like"/>
    <property type="match status" value="2"/>
</dbReference>
<dbReference type="SUPFAM" id="SSF52540">
    <property type="entry name" value="P-loop containing nucleoside triphosphate hydrolases"/>
    <property type="match status" value="1"/>
</dbReference>
<dbReference type="SUPFAM" id="SSF50447">
    <property type="entry name" value="Translation proteins"/>
    <property type="match status" value="1"/>
</dbReference>
<dbReference type="PROSITE" id="PS00301">
    <property type="entry name" value="G_TR_1"/>
    <property type="match status" value="1"/>
</dbReference>
<dbReference type="PROSITE" id="PS51722">
    <property type="entry name" value="G_TR_2"/>
    <property type="match status" value="1"/>
</dbReference>
<name>LEPA_STRPM</name>